<name>MENH_ECO7I</name>
<protein>
    <recommendedName>
        <fullName evidence="1">2-succinyl-6-hydroxy-2,4-cyclohexadiene-1-carboxylate synthase</fullName>
        <shortName evidence="1">SHCHC synthase</shortName>
        <ecNumber evidence="1">4.2.99.20</ecNumber>
    </recommendedName>
</protein>
<comment type="function">
    <text evidence="1">Catalyzes a proton abstraction reaction that results in 2,5-elimination of pyruvate from 2-succinyl-5-enolpyruvyl-6-hydroxy-3-cyclohexene-1-carboxylate (SEPHCHC) and the formation of 2-succinyl-6-hydroxy-2,4-cyclohexadiene-1-carboxylate (SHCHC).</text>
</comment>
<comment type="catalytic activity">
    <reaction evidence="1">
        <text>5-enolpyruvoyl-6-hydroxy-2-succinyl-cyclohex-3-ene-1-carboxylate = (1R,6R)-6-hydroxy-2-succinyl-cyclohexa-2,4-diene-1-carboxylate + pyruvate</text>
        <dbReference type="Rhea" id="RHEA:25597"/>
        <dbReference type="ChEBI" id="CHEBI:15361"/>
        <dbReference type="ChEBI" id="CHEBI:58689"/>
        <dbReference type="ChEBI" id="CHEBI:58818"/>
        <dbReference type="EC" id="4.2.99.20"/>
    </reaction>
</comment>
<comment type="pathway">
    <text evidence="1">Quinol/quinone metabolism; 1,4-dihydroxy-2-naphthoate biosynthesis; 1,4-dihydroxy-2-naphthoate from chorismate: step 3/7.</text>
</comment>
<comment type="pathway">
    <text evidence="1">Quinol/quinone metabolism; menaquinone biosynthesis.</text>
</comment>
<comment type="subunit">
    <text evidence="1">Monomer.</text>
</comment>
<comment type="similarity">
    <text evidence="1">Belongs to the AB hydrolase superfamily. MenH family.</text>
</comment>
<dbReference type="EC" id="4.2.99.20" evidence="1"/>
<dbReference type="EMBL" id="CU928164">
    <property type="protein sequence ID" value="CAR18537.1"/>
    <property type="molecule type" value="Genomic_DNA"/>
</dbReference>
<dbReference type="RefSeq" id="WP_000600540.1">
    <property type="nucleotide sequence ID" value="NC_011750.1"/>
</dbReference>
<dbReference type="RefSeq" id="YP_002408367.1">
    <property type="nucleotide sequence ID" value="NC_011750.1"/>
</dbReference>
<dbReference type="SMR" id="B7NNU3"/>
<dbReference type="STRING" id="585057.ECIAI39_2411"/>
<dbReference type="ESTHER" id="ecoli-YFBB">
    <property type="family name" value="MenH_SHCHC"/>
</dbReference>
<dbReference type="MEROPS" id="S33.996"/>
<dbReference type="KEGG" id="ect:ECIAI39_2411"/>
<dbReference type="PATRIC" id="fig|585057.6.peg.2513"/>
<dbReference type="HOGENOM" id="CLU_020336_38_2_6"/>
<dbReference type="UniPathway" id="UPA00079"/>
<dbReference type="UniPathway" id="UPA01057">
    <property type="reaction ID" value="UER00900"/>
</dbReference>
<dbReference type="Proteomes" id="UP000000749">
    <property type="component" value="Chromosome"/>
</dbReference>
<dbReference type="GO" id="GO:0070205">
    <property type="term" value="F:2-succinyl-6-hydroxy-2,4-cyclohexadiene-1-carboxylate synthase activity"/>
    <property type="evidence" value="ECO:0007669"/>
    <property type="project" value="UniProtKB-UniRule"/>
</dbReference>
<dbReference type="GO" id="GO:0009234">
    <property type="term" value="P:menaquinone biosynthetic process"/>
    <property type="evidence" value="ECO:0007669"/>
    <property type="project" value="UniProtKB-UniRule"/>
</dbReference>
<dbReference type="FunFam" id="3.40.50.1820:FF:000038">
    <property type="entry name" value="2-succinyl-6-hydroxy-2,4-cyclohexadiene-1-carboxylate synthase"/>
    <property type="match status" value="1"/>
</dbReference>
<dbReference type="Gene3D" id="3.40.50.1820">
    <property type="entry name" value="alpha/beta hydrolase"/>
    <property type="match status" value="1"/>
</dbReference>
<dbReference type="HAMAP" id="MF_01660">
    <property type="entry name" value="MenH"/>
    <property type="match status" value="1"/>
</dbReference>
<dbReference type="InterPro" id="IPR000073">
    <property type="entry name" value="AB_hydrolase_1"/>
</dbReference>
<dbReference type="InterPro" id="IPR029058">
    <property type="entry name" value="AB_hydrolase_fold"/>
</dbReference>
<dbReference type="InterPro" id="IPR022485">
    <property type="entry name" value="SHCHC_synthase_MenH"/>
</dbReference>
<dbReference type="NCBIfam" id="TIGR03695">
    <property type="entry name" value="menH_SHCHC"/>
    <property type="match status" value="1"/>
</dbReference>
<dbReference type="NCBIfam" id="NF008340">
    <property type="entry name" value="PRK11126.1"/>
    <property type="match status" value="1"/>
</dbReference>
<dbReference type="PANTHER" id="PTHR42916">
    <property type="entry name" value="2-SUCCINYL-5-ENOLPYRUVYL-6-HYDROXY-3-CYCLOHEXENE-1-CARBOXYLATE SYNTHASE"/>
    <property type="match status" value="1"/>
</dbReference>
<dbReference type="PANTHER" id="PTHR42916:SF1">
    <property type="entry name" value="PROTEIN PHYLLO, CHLOROPLASTIC"/>
    <property type="match status" value="1"/>
</dbReference>
<dbReference type="Pfam" id="PF12697">
    <property type="entry name" value="Abhydrolase_6"/>
    <property type="match status" value="1"/>
</dbReference>
<dbReference type="SUPFAM" id="SSF53474">
    <property type="entry name" value="alpha/beta-Hydrolases"/>
    <property type="match status" value="1"/>
</dbReference>
<organism>
    <name type="scientific">Escherichia coli O7:K1 (strain IAI39 / ExPEC)</name>
    <dbReference type="NCBI Taxonomy" id="585057"/>
    <lineage>
        <taxon>Bacteria</taxon>
        <taxon>Pseudomonadati</taxon>
        <taxon>Pseudomonadota</taxon>
        <taxon>Gammaproteobacteria</taxon>
        <taxon>Enterobacterales</taxon>
        <taxon>Enterobacteriaceae</taxon>
        <taxon>Escherichia</taxon>
    </lineage>
</organism>
<gene>
    <name evidence="1" type="primary">menH</name>
    <name type="ordered locus">ECIAI39_2411</name>
</gene>
<sequence length="252" mass="27668">MILHAQAKHGKPGLPWLVFLHGFSGDCHEWQEVGEVFADYSRLYVDLPGHGGSAAISVDGFDDVTGLLCKTLVSYNIPDFWLVGYSLGGRVAMMAACQGLAGLCGVVVEGGHPGLQNAEQRTERQRSDRQWAQRFRTEPLTAVFADWYQQPVFASLNDEQRRELVALRSNNNGATLAAMLEATSLAVQPDLRANLSARTFAFYYLCGERDSKFRALAAELAAECYVIPRAGHNAHRENPAGVIASLAQILRF</sequence>
<accession>B7NNU3</accession>
<evidence type="ECO:0000255" key="1">
    <source>
        <dbReference type="HAMAP-Rule" id="MF_01660"/>
    </source>
</evidence>
<feature type="chain" id="PRO_1000187107" description="2-succinyl-6-hydroxy-2,4-cyclohexadiene-1-carboxylate synthase">
    <location>
        <begin position="1"/>
        <end position="252"/>
    </location>
</feature>
<keyword id="KW-0456">Lyase</keyword>
<keyword id="KW-0474">Menaquinone biosynthesis</keyword>
<reference key="1">
    <citation type="journal article" date="2009" name="PLoS Genet.">
        <title>Organised genome dynamics in the Escherichia coli species results in highly diverse adaptive paths.</title>
        <authorList>
            <person name="Touchon M."/>
            <person name="Hoede C."/>
            <person name="Tenaillon O."/>
            <person name="Barbe V."/>
            <person name="Baeriswyl S."/>
            <person name="Bidet P."/>
            <person name="Bingen E."/>
            <person name="Bonacorsi S."/>
            <person name="Bouchier C."/>
            <person name="Bouvet O."/>
            <person name="Calteau A."/>
            <person name="Chiapello H."/>
            <person name="Clermont O."/>
            <person name="Cruveiller S."/>
            <person name="Danchin A."/>
            <person name="Diard M."/>
            <person name="Dossat C."/>
            <person name="Karoui M.E."/>
            <person name="Frapy E."/>
            <person name="Garry L."/>
            <person name="Ghigo J.M."/>
            <person name="Gilles A.M."/>
            <person name="Johnson J."/>
            <person name="Le Bouguenec C."/>
            <person name="Lescat M."/>
            <person name="Mangenot S."/>
            <person name="Martinez-Jehanne V."/>
            <person name="Matic I."/>
            <person name="Nassif X."/>
            <person name="Oztas S."/>
            <person name="Petit M.A."/>
            <person name="Pichon C."/>
            <person name="Rouy Z."/>
            <person name="Ruf C.S."/>
            <person name="Schneider D."/>
            <person name="Tourret J."/>
            <person name="Vacherie B."/>
            <person name="Vallenet D."/>
            <person name="Medigue C."/>
            <person name="Rocha E.P.C."/>
            <person name="Denamur E."/>
        </authorList>
    </citation>
    <scope>NUCLEOTIDE SEQUENCE [LARGE SCALE GENOMIC DNA]</scope>
    <source>
        <strain>IAI39 / ExPEC</strain>
    </source>
</reference>
<proteinExistence type="inferred from homology"/>